<keyword id="KW-0067">ATP-binding</keyword>
<keyword id="KW-0131">Cell cycle</keyword>
<keyword id="KW-0132">Cell division</keyword>
<keyword id="KW-0133">Cell shape</keyword>
<keyword id="KW-0961">Cell wall biogenesis/degradation</keyword>
<keyword id="KW-0963">Cytoplasm</keyword>
<keyword id="KW-0436">Ligase</keyword>
<keyword id="KW-0547">Nucleotide-binding</keyword>
<keyword id="KW-0573">Peptidoglycan synthesis</keyword>
<feature type="chain" id="PRO_1000056891" description="UDP-N-acetylmuramoylalanine--D-glutamate ligase">
    <location>
        <begin position="1"/>
        <end position="437"/>
    </location>
</feature>
<feature type="binding site" evidence="1">
    <location>
        <begin position="115"/>
        <end position="121"/>
    </location>
    <ligand>
        <name>ATP</name>
        <dbReference type="ChEBI" id="CHEBI:30616"/>
    </ligand>
</feature>
<gene>
    <name evidence="1" type="primary">murD</name>
    <name type="ordered locus">VIBHAR_00900</name>
</gene>
<dbReference type="EC" id="6.3.2.9" evidence="1"/>
<dbReference type="EMBL" id="CP000789">
    <property type="protein sequence ID" value="ABU69899.1"/>
    <property type="molecule type" value="Genomic_DNA"/>
</dbReference>
<dbReference type="RefSeq" id="WP_012126985.1">
    <property type="nucleotide sequence ID" value="NC_009783.1"/>
</dbReference>
<dbReference type="SMR" id="A7MXR3"/>
<dbReference type="KEGG" id="vha:VIBHAR_00900"/>
<dbReference type="PATRIC" id="fig|338187.25.peg.1718"/>
<dbReference type="UniPathway" id="UPA00219"/>
<dbReference type="Proteomes" id="UP000008152">
    <property type="component" value="Chromosome I"/>
</dbReference>
<dbReference type="GO" id="GO:0005737">
    <property type="term" value="C:cytoplasm"/>
    <property type="evidence" value="ECO:0007669"/>
    <property type="project" value="UniProtKB-SubCell"/>
</dbReference>
<dbReference type="GO" id="GO:0005524">
    <property type="term" value="F:ATP binding"/>
    <property type="evidence" value="ECO:0007669"/>
    <property type="project" value="UniProtKB-UniRule"/>
</dbReference>
<dbReference type="GO" id="GO:0008764">
    <property type="term" value="F:UDP-N-acetylmuramoylalanine-D-glutamate ligase activity"/>
    <property type="evidence" value="ECO:0007669"/>
    <property type="project" value="UniProtKB-UniRule"/>
</dbReference>
<dbReference type="GO" id="GO:0051301">
    <property type="term" value="P:cell division"/>
    <property type="evidence" value="ECO:0007669"/>
    <property type="project" value="UniProtKB-KW"/>
</dbReference>
<dbReference type="GO" id="GO:0071555">
    <property type="term" value="P:cell wall organization"/>
    <property type="evidence" value="ECO:0007669"/>
    <property type="project" value="UniProtKB-KW"/>
</dbReference>
<dbReference type="GO" id="GO:0009252">
    <property type="term" value="P:peptidoglycan biosynthetic process"/>
    <property type="evidence" value="ECO:0007669"/>
    <property type="project" value="UniProtKB-UniRule"/>
</dbReference>
<dbReference type="GO" id="GO:0008360">
    <property type="term" value="P:regulation of cell shape"/>
    <property type="evidence" value="ECO:0007669"/>
    <property type="project" value="UniProtKB-KW"/>
</dbReference>
<dbReference type="Gene3D" id="3.90.190.20">
    <property type="entry name" value="Mur ligase, C-terminal domain"/>
    <property type="match status" value="1"/>
</dbReference>
<dbReference type="Gene3D" id="3.40.1190.10">
    <property type="entry name" value="Mur-like, catalytic domain"/>
    <property type="match status" value="1"/>
</dbReference>
<dbReference type="Gene3D" id="3.40.50.720">
    <property type="entry name" value="NAD(P)-binding Rossmann-like Domain"/>
    <property type="match status" value="1"/>
</dbReference>
<dbReference type="HAMAP" id="MF_00639">
    <property type="entry name" value="MurD"/>
    <property type="match status" value="1"/>
</dbReference>
<dbReference type="InterPro" id="IPR036565">
    <property type="entry name" value="Mur-like_cat_sf"/>
</dbReference>
<dbReference type="InterPro" id="IPR004101">
    <property type="entry name" value="Mur_ligase_C"/>
</dbReference>
<dbReference type="InterPro" id="IPR036615">
    <property type="entry name" value="Mur_ligase_C_dom_sf"/>
</dbReference>
<dbReference type="InterPro" id="IPR013221">
    <property type="entry name" value="Mur_ligase_cen"/>
</dbReference>
<dbReference type="InterPro" id="IPR005762">
    <property type="entry name" value="MurD"/>
</dbReference>
<dbReference type="NCBIfam" id="TIGR01087">
    <property type="entry name" value="murD"/>
    <property type="match status" value="1"/>
</dbReference>
<dbReference type="PANTHER" id="PTHR43692">
    <property type="entry name" value="UDP-N-ACETYLMURAMOYLALANINE--D-GLUTAMATE LIGASE"/>
    <property type="match status" value="1"/>
</dbReference>
<dbReference type="PANTHER" id="PTHR43692:SF1">
    <property type="entry name" value="UDP-N-ACETYLMURAMOYLALANINE--D-GLUTAMATE LIGASE"/>
    <property type="match status" value="1"/>
</dbReference>
<dbReference type="Pfam" id="PF02875">
    <property type="entry name" value="Mur_ligase_C"/>
    <property type="match status" value="1"/>
</dbReference>
<dbReference type="Pfam" id="PF08245">
    <property type="entry name" value="Mur_ligase_M"/>
    <property type="match status" value="1"/>
</dbReference>
<dbReference type="Pfam" id="PF21799">
    <property type="entry name" value="MurD-like_N"/>
    <property type="match status" value="1"/>
</dbReference>
<dbReference type="SUPFAM" id="SSF51984">
    <property type="entry name" value="MurCD N-terminal domain"/>
    <property type="match status" value="1"/>
</dbReference>
<dbReference type="SUPFAM" id="SSF53623">
    <property type="entry name" value="MurD-like peptide ligases, catalytic domain"/>
    <property type="match status" value="1"/>
</dbReference>
<dbReference type="SUPFAM" id="SSF53244">
    <property type="entry name" value="MurD-like peptide ligases, peptide-binding domain"/>
    <property type="match status" value="1"/>
</dbReference>
<accession>A7MXR3</accession>
<name>MURD_VIBC1</name>
<protein>
    <recommendedName>
        <fullName evidence="1">UDP-N-acetylmuramoylalanine--D-glutamate ligase</fullName>
        <ecNumber evidence="1">6.3.2.9</ecNumber>
    </recommendedName>
    <alternativeName>
        <fullName evidence="1">D-glutamic acid-adding enzyme</fullName>
    </alternativeName>
    <alternativeName>
        <fullName evidence="1">UDP-N-acetylmuramoyl-L-alanyl-D-glutamate synthetase</fullName>
    </alternativeName>
</protein>
<organism>
    <name type="scientific">Vibrio campbellii (strain ATCC BAA-1116)</name>
    <dbReference type="NCBI Taxonomy" id="2902295"/>
    <lineage>
        <taxon>Bacteria</taxon>
        <taxon>Pseudomonadati</taxon>
        <taxon>Pseudomonadota</taxon>
        <taxon>Gammaproteobacteria</taxon>
        <taxon>Vibrionales</taxon>
        <taxon>Vibrionaceae</taxon>
        <taxon>Vibrio</taxon>
    </lineage>
</organism>
<comment type="function">
    <text evidence="1">Cell wall formation. Catalyzes the addition of glutamate to the nucleotide precursor UDP-N-acetylmuramoyl-L-alanine (UMA).</text>
</comment>
<comment type="catalytic activity">
    <reaction evidence="1">
        <text>UDP-N-acetyl-alpha-D-muramoyl-L-alanine + D-glutamate + ATP = UDP-N-acetyl-alpha-D-muramoyl-L-alanyl-D-glutamate + ADP + phosphate + H(+)</text>
        <dbReference type="Rhea" id="RHEA:16429"/>
        <dbReference type="ChEBI" id="CHEBI:15378"/>
        <dbReference type="ChEBI" id="CHEBI:29986"/>
        <dbReference type="ChEBI" id="CHEBI:30616"/>
        <dbReference type="ChEBI" id="CHEBI:43474"/>
        <dbReference type="ChEBI" id="CHEBI:83898"/>
        <dbReference type="ChEBI" id="CHEBI:83900"/>
        <dbReference type="ChEBI" id="CHEBI:456216"/>
        <dbReference type="EC" id="6.3.2.9"/>
    </reaction>
</comment>
<comment type="pathway">
    <text evidence="1">Cell wall biogenesis; peptidoglycan biosynthesis.</text>
</comment>
<comment type="subcellular location">
    <subcellularLocation>
        <location evidence="1">Cytoplasm</location>
    </subcellularLocation>
</comment>
<comment type="similarity">
    <text evidence="1">Belongs to the MurCDEF family.</text>
</comment>
<sequence length="437" mass="47117">MERWQNIHKVVVVGLGITGLSVVKHLTKTQPQLTVKVIDTRATPPGTERLPEQVELHSGGWNTEWLAEADLVVTNPGIALATPEIQEVLAKGAPVVGDIELFAWAVDKPVIAITGSNGKSTVTDLTGVMAKAAGLTVGVGGNIGVPALDLLEQDADLYVLELSSFQLESTLSLKLKAAAFLNLSEDHMDRYEGMSDYRQAKLRIFDNAELAVVNRDDQETFPDTETPLVTFGSDEQAYGLEADGNRTWLLDHGQRVIASDELKLVGKHNLANALVVLALLKAADVDYHKSLNALKTYTGLTHRCQVVADNRGVKWVNDSKATNIASTIAALSGLESTGKLYLLVGGVGKGADFTPLKPIFATLNLQLCCFGADGDEFMPLHESATRFDTMEDVIQQISSQLKTGDMVMLSPACASFDQFDNFMARGDAFAALAEKYA</sequence>
<proteinExistence type="inferred from homology"/>
<reference key="1">
    <citation type="submission" date="2007-08" db="EMBL/GenBank/DDBJ databases">
        <authorList>
            <consortium name="The Vibrio harveyi Genome Sequencing Project"/>
            <person name="Bassler B."/>
            <person name="Clifton S.W."/>
            <person name="Fulton L."/>
            <person name="Delehaunty K."/>
            <person name="Fronick C."/>
            <person name="Harrison M."/>
            <person name="Markivic C."/>
            <person name="Fulton R."/>
            <person name="Tin-Wollam A.-M."/>
            <person name="Shah N."/>
            <person name="Pepin K."/>
            <person name="Nash W."/>
            <person name="Thiruvilangam P."/>
            <person name="Bhonagiri V."/>
            <person name="Waters C."/>
            <person name="Tu K.C."/>
            <person name="Irgon J."/>
            <person name="Wilson R.K."/>
        </authorList>
    </citation>
    <scope>NUCLEOTIDE SEQUENCE [LARGE SCALE GENOMIC DNA]</scope>
    <source>
        <strain>ATCC BAA-1116 / BB120</strain>
    </source>
</reference>
<evidence type="ECO:0000255" key="1">
    <source>
        <dbReference type="HAMAP-Rule" id="MF_00639"/>
    </source>
</evidence>